<protein>
    <recommendedName>
        <fullName evidence="1">Probable malate:quinone oxidoreductase 1</fullName>
        <ecNumber evidence="1">1.1.5.4</ecNumber>
    </recommendedName>
    <alternativeName>
        <fullName evidence="1">MQO 1</fullName>
    </alternativeName>
    <alternativeName>
        <fullName evidence="1">Malate dehydrogenase [quinone] 1</fullName>
    </alternativeName>
</protein>
<dbReference type="EC" id="1.1.5.4" evidence="1"/>
<dbReference type="EMBL" id="AE015451">
    <property type="protein sequence ID" value="AAN66376.1"/>
    <property type="molecule type" value="Genomic_DNA"/>
</dbReference>
<dbReference type="RefSeq" id="NP_742912.1">
    <property type="nucleotide sequence ID" value="NC_002947.4"/>
</dbReference>
<dbReference type="SMR" id="Q88PU7"/>
<dbReference type="STRING" id="160488.PP_0751"/>
<dbReference type="PaxDb" id="160488-PP_0751"/>
<dbReference type="KEGG" id="ppu:PP_0751"/>
<dbReference type="PATRIC" id="fig|160488.4.peg.805"/>
<dbReference type="eggNOG" id="COG0579">
    <property type="taxonomic scope" value="Bacteria"/>
</dbReference>
<dbReference type="HOGENOM" id="CLU_028151_0_0_6"/>
<dbReference type="OrthoDB" id="9763983at2"/>
<dbReference type="PhylomeDB" id="Q88PU7"/>
<dbReference type="BioCyc" id="PPUT160488:G1G01-826-MONOMER"/>
<dbReference type="UniPathway" id="UPA00223">
    <property type="reaction ID" value="UER01008"/>
</dbReference>
<dbReference type="Proteomes" id="UP000000556">
    <property type="component" value="Chromosome"/>
</dbReference>
<dbReference type="GO" id="GO:0047545">
    <property type="term" value="F:2-hydroxyglutarate dehydrogenase activity"/>
    <property type="evidence" value="ECO:0007669"/>
    <property type="project" value="TreeGrafter"/>
</dbReference>
<dbReference type="GO" id="GO:0008924">
    <property type="term" value="F:L-malate dehydrogenase (quinone) activity"/>
    <property type="evidence" value="ECO:0007669"/>
    <property type="project" value="UniProtKB-UniRule"/>
</dbReference>
<dbReference type="GO" id="GO:0006099">
    <property type="term" value="P:tricarboxylic acid cycle"/>
    <property type="evidence" value="ECO:0007669"/>
    <property type="project" value="UniProtKB-UniRule"/>
</dbReference>
<dbReference type="Gene3D" id="3.50.50.60">
    <property type="entry name" value="FAD/NAD(P)-binding domain"/>
    <property type="match status" value="1"/>
</dbReference>
<dbReference type="HAMAP" id="MF_00212">
    <property type="entry name" value="MQO"/>
    <property type="match status" value="1"/>
</dbReference>
<dbReference type="InterPro" id="IPR036188">
    <property type="entry name" value="FAD/NAD-bd_sf"/>
</dbReference>
<dbReference type="InterPro" id="IPR006231">
    <property type="entry name" value="MQO"/>
</dbReference>
<dbReference type="NCBIfam" id="TIGR01320">
    <property type="entry name" value="mal_quin_oxido"/>
    <property type="match status" value="1"/>
</dbReference>
<dbReference type="NCBIfam" id="NF003603">
    <property type="entry name" value="PRK05257.1-1"/>
    <property type="match status" value="1"/>
</dbReference>
<dbReference type="NCBIfam" id="NF003605">
    <property type="entry name" value="PRK05257.1-4"/>
    <property type="match status" value="1"/>
</dbReference>
<dbReference type="NCBIfam" id="NF003606">
    <property type="entry name" value="PRK05257.2-1"/>
    <property type="match status" value="1"/>
</dbReference>
<dbReference type="NCBIfam" id="NF003611">
    <property type="entry name" value="PRK05257.3-2"/>
    <property type="match status" value="1"/>
</dbReference>
<dbReference type="NCBIfam" id="NF003613">
    <property type="entry name" value="PRK05257.3-4"/>
    <property type="match status" value="1"/>
</dbReference>
<dbReference type="NCBIfam" id="NF009875">
    <property type="entry name" value="PRK13339.1"/>
    <property type="match status" value="1"/>
</dbReference>
<dbReference type="PANTHER" id="PTHR43104">
    <property type="entry name" value="L-2-HYDROXYGLUTARATE DEHYDROGENASE, MITOCHONDRIAL"/>
    <property type="match status" value="1"/>
</dbReference>
<dbReference type="PANTHER" id="PTHR43104:SF2">
    <property type="entry name" value="L-2-HYDROXYGLUTARATE DEHYDROGENASE, MITOCHONDRIAL"/>
    <property type="match status" value="1"/>
</dbReference>
<dbReference type="Pfam" id="PF06039">
    <property type="entry name" value="Mqo"/>
    <property type="match status" value="1"/>
</dbReference>
<dbReference type="SUPFAM" id="SSF51905">
    <property type="entry name" value="FAD/NAD(P)-binding domain"/>
    <property type="match status" value="1"/>
</dbReference>
<gene>
    <name evidence="1" type="primary">mqo1</name>
    <name type="synonym">mqo-1</name>
    <name type="ordered locus">PP_0751</name>
</gene>
<proteinExistence type="inferred from homology"/>
<reference key="1">
    <citation type="journal article" date="2002" name="Environ. Microbiol.">
        <title>Complete genome sequence and comparative analysis of the metabolically versatile Pseudomonas putida KT2440.</title>
        <authorList>
            <person name="Nelson K.E."/>
            <person name="Weinel C."/>
            <person name="Paulsen I.T."/>
            <person name="Dodson R.J."/>
            <person name="Hilbert H."/>
            <person name="Martins dos Santos V.A.P."/>
            <person name="Fouts D.E."/>
            <person name="Gill S.R."/>
            <person name="Pop M."/>
            <person name="Holmes M."/>
            <person name="Brinkac L.M."/>
            <person name="Beanan M.J."/>
            <person name="DeBoy R.T."/>
            <person name="Daugherty S.C."/>
            <person name="Kolonay J.F."/>
            <person name="Madupu R."/>
            <person name="Nelson W.C."/>
            <person name="White O."/>
            <person name="Peterson J.D."/>
            <person name="Khouri H.M."/>
            <person name="Hance I."/>
            <person name="Chris Lee P."/>
            <person name="Holtzapple E.K."/>
            <person name="Scanlan D."/>
            <person name="Tran K."/>
            <person name="Moazzez A."/>
            <person name="Utterback T.R."/>
            <person name="Rizzo M."/>
            <person name="Lee K."/>
            <person name="Kosack D."/>
            <person name="Moestl D."/>
            <person name="Wedler H."/>
            <person name="Lauber J."/>
            <person name="Stjepandic D."/>
            <person name="Hoheisel J."/>
            <person name="Straetz M."/>
            <person name="Heim S."/>
            <person name="Kiewitz C."/>
            <person name="Eisen J.A."/>
            <person name="Timmis K.N."/>
            <person name="Duesterhoeft A."/>
            <person name="Tuemmler B."/>
            <person name="Fraser C.M."/>
        </authorList>
    </citation>
    <scope>NUCLEOTIDE SEQUENCE [LARGE SCALE GENOMIC DNA]</scope>
    <source>
        <strain>ATCC 47054 / DSM 6125 / CFBP 8728 / NCIMB 11950 / KT2440</strain>
    </source>
</reference>
<name>MQO1_PSEPK</name>
<accession>Q88PU7</accession>
<organism>
    <name type="scientific">Pseudomonas putida (strain ATCC 47054 / DSM 6125 / CFBP 8728 / NCIMB 11950 / KT2440)</name>
    <dbReference type="NCBI Taxonomy" id="160488"/>
    <lineage>
        <taxon>Bacteria</taxon>
        <taxon>Pseudomonadati</taxon>
        <taxon>Pseudomonadota</taxon>
        <taxon>Gammaproteobacteria</taxon>
        <taxon>Pseudomonadales</taxon>
        <taxon>Pseudomonadaceae</taxon>
        <taxon>Pseudomonas</taxon>
    </lineage>
</organism>
<feature type="chain" id="PRO_0000128732" description="Probable malate:quinone oxidoreductase 1">
    <location>
        <begin position="1"/>
        <end position="502"/>
    </location>
</feature>
<evidence type="ECO:0000255" key="1">
    <source>
        <dbReference type="HAMAP-Rule" id="MF_00212"/>
    </source>
</evidence>
<keyword id="KW-0274">FAD</keyword>
<keyword id="KW-0285">Flavoprotein</keyword>
<keyword id="KW-0560">Oxidoreductase</keyword>
<keyword id="KW-1185">Reference proteome</keyword>
<keyword id="KW-0816">Tricarboxylic acid cycle</keyword>
<sequence>MAQNESVDVVLVGAGIMSATLAVLLKELDPTLKLEVVEAMDSGAAESSNPWNNAGTGHAGLCELNYTPQAADGSIDIKKAVHINTQFEVSRQFWAYLTKKGNFGSARAFINPVPHLSYVEGDKGVSFLKKRFELLKQHHAFAEMEYTEDKAVMNDWMPLMMPGRPADQHIAATRVAKGTDVNFGALTNKLLKLLGDSPDAQVKYSKKVVGLRRNGSGWTVSIKDVNSGGSREVDARFVFLGAGGAALPLLQLSGIPESKGFGGFPVSGQWLRCDNPEIVKQHQAKVYSQAAVGAPPMSVPHLDTRVVDGKTSLLFGPYAGFTTKFLKHGSLMDLPLSVRMGNIGPMLAVARDNMDLTKYLVSEVMQSMEQRLEALRRFYPQAKAEDWRLEVAGQRVQIIKKDPKKGGVLQFGTELVSAQDGSLAALLGASPGASVTVSIMLELIERCFPEQAKGAWAAKLKEIFPAREKTLATDAALYHKISADNDAALDLAESSPAAKHYA</sequence>
<comment type="catalytic activity">
    <reaction evidence="1">
        <text>(S)-malate + a quinone = a quinol + oxaloacetate</text>
        <dbReference type="Rhea" id="RHEA:46012"/>
        <dbReference type="ChEBI" id="CHEBI:15589"/>
        <dbReference type="ChEBI" id="CHEBI:16452"/>
        <dbReference type="ChEBI" id="CHEBI:24646"/>
        <dbReference type="ChEBI" id="CHEBI:132124"/>
        <dbReference type="EC" id="1.1.5.4"/>
    </reaction>
</comment>
<comment type="cofactor">
    <cofactor evidence="1">
        <name>FAD</name>
        <dbReference type="ChEBI" id="CHEBI:57692"/>
    </cofactor>
</comment>
<comment type="pathway">
    <text evidence="1">Carbohydrate metabolism; tricarboxylic acid cycle; oxaloacetate from (S)-malate (quinone route): step 1/1.</text>
</comment>
<comment type="similarity">
    <text evidence="1">Belongs to the MQO family.</text>
</comment>